<sequence>MSRGQIIHSGHFMCSNPHDDLVQDEDEEDVEVDVVEDDDKSMEASSSVHHKNKALDEKPVTFYKFGVGKTQSIAIDVSLNKLNKCIKVAYNKMTTPKWKDFKGLRLHWKQRVRLNNVIWRAYYIEFRKKQPEKPKKPFCYFAVPDDDTTHQKIEGSIVEGMYWKRKMEGVCAQYKRWRIRSKHNLVTDKGGMVATCSSTSVSSMTGELKRKRKHTVPKETIESKLRSYEPPVKLQRSQTPKHTISDEFAWDFDDLDNVFTDDFLNSLSEPYMFPDPRDVYSGNNADIMQPGLLPLQPTIEDIMMSLGDDMPDSPPFHNDRDTMRTPTNDQPSISAQQIPQMRRSASSSASLHQMQVAQAQAQSISQISQPSQQLQHQIQIQQPVAARPHEFMASSIMMDYRLMPTRQSSAITSQMLMLSQSASTLSSQPQYATSTHYSTNNSFLPIRNTMTNQHHLGHTSQHSPWNKQQQSNFLVSLPHQSHVERILNNQPPLVPPPSRSNLLPTQNDPYLPQFLQSTQPTPQPQSHDPMMAPSRSWWLDSPLTASVQSPLSVATPLPLANQTGPQTPLGQLIGSADNGFLFGGNNTPGGFKMSGTTSGVPTLSQRLEQPPISRTSTIFGNVENKPERIFTSLTSQNTPTPSPLDISSLSRLRTSSLNESWKMSHIVEGSPTYQAFAASVTTKPSILESPSTSGDISGPASVPVQASQHPPKIITPPSASSKRKEQEAAMAPLVNRQQSCDVNLLNGKMAVKVEEKSGRHYLPTTPTELKEVTKEEPLLMSAPSSVKSMRRQAPDSTLHPEERKRILHLHAEQNRRSALKDGFDQLMDIIPDLYSGGVKPTNAVVLAKSADHIRRLQAEKWDKTQKIDEAKAKIEKLNQKITSLQSNLPQSSAPSSSSQVDSKTSLETFFDRYVKEGAKKNWRFWVMSQMLKPICVTQTNSFASSVAGDSSSRNEVAASCSDWLNKNWKATELRPLASTLLVSLATNSSILAEPDTLPDYVMQQLKNPF</sequence>
<dbReference type="EMBL" id="AF213473">
    <property type="protein sequence ID" value="AAL50027.1"/>
    <property type="molecule type" value="mRNA"/>
</dbReference>
<dbReference type="EMBL" id="AF264757">
    <property type="protein sequence ID" value="AAK20949.1"/>
    <property type="molecule type" value="mRNA"/>
</dbReference>
<dbReference type="EMBL" id="FO081094">
    <property type="protein sequence ID" value="CCD69075.1"/>
    <property type="molecule type" value="Genomic_DNA"/>
</dbReference>
<dbReference type="PIR" id="T16906">
    <property type="entry name" value="T16906"/>
</dbReference>
<dbReference type="RefSeq" id="NP_498631.2">
    <property type="nucleotide sequence ID" value="NM_066230.4"/>
</dbReference>
<dbReference type="SMR" id="P41846"/>
<dbReference type="BioGRID" id="41259">
    <property type="interactions" value="12"/>
</dbReference>
<dbReference type="FunCoup" id="P41846">
    <property type="interactions" value="1980"/>
</dbReference>
<dbReference type="IntAct" id="P41846">
    <property type="interactions" value="8"/>
</dbReference>
<dbReference type="STRING" id="6239.T20B12.6a.1"/>
<dbReference type="iPTMnet" id="P41846"/>
<dbReference type="PaxDb" id="6239-T20B12.6a"/>
<dbReference type="PeptideAtlas" id="P41846"/>
<dbReference type="EnsemblMetazoa" id="T20B12.6a.1">
    <property type="protein sequence ID" value="T20B12.6a.1"/>
    <property type="gene ID" value="WBGene00003378"/>
</dbReference>
<dbReference type="GeneID" id="176050"/>
<dbReference type="KEGG" id="cel:CELE_T20B12.6"/>
<dbReference type="UCSC" id="T20B12.6a">
    <property type="organism name" value="c. elegans"/>
</dbReference>
<dbReference type="AGR" id="WB:WBGene00003378"/>
<dbReference type="CTD" id="176050"/>
<dbReference type="WormBase" id="T20B12.6a">
    <property type="protein sequence ID" value="CE30186"/>
    <property type="gene ID" value="WBGene00003378"/>
    <property type="gene designation" value="mml-1"/>
</dbReference>
<dbReference type="eggNOG" id="KOG3582">
    <property type="taxonomic scope" value="Eukaryota"/>
</dbReference>
<dbReference type="HOGENOM" id="CLU_007471_0_0_1"/>
<dbReference type="InParanoid" id="P41846"/>
<dbReference type="OMA" id="TEFHSSI"/>
<dbReference type="OrthoDB" id="6022628at2759"/>
<dbReference type="PhylomeDB" id="P41846"/>
<dbReference type="Reactome" id="R-CEL-163358">
    <property type="pathway name" value="PKA-mediated phosphorylation of key metabolic factors"/>
</dbReference>
<dbReference type="SignaLink" id="P41846"/>
<dbReference type="PRO" id="PR:P41846"/>
<dbReference type="Proteomes" id="UP000001940">
    <property type="component" value="Chromosome III"/>
</dbReference>
<dbReference type="Bgee" id="WBGene00003378">
    <property type="expression patterns" value="Expressed in embryo and 3 other cell types or tissues"/>
</dbReference>
<dbReference type="ExpressionAtlas" id="P41846">
    <property type="expression patterns" value="baseline and differential"/>
</dbReference>
<dbReference type="GO" id="GO:0005737">
    <property type="term" value="C:cytoplasm"/>
    <property type="evidence" value="ECO:0000314"/>
    <property type="project" value="WormBase"/>
</dbReference>
<dbReference type="GO" id="GO:0005739">
    <property type="term" value="C:mitochondrion"/>
    <property type="evidence" value="ECO:0000314"/>
    <property type="project" value="WormBase"/>
</dbReference>
<dbReference type="GO" id="GO:0005634">
    <property type="term" value="C:nucleus"/>
    <property type="evidence" value="ECO:0000314"/>
    <property type="project" value="WormBase"/>
</dbReference>
<dbReference type="GO" id="GO:0000981">
    <property type="term" value="F:DNA-binding transcription factor activity, RNA polymerase II-specific"/>
    <property type="evidence" value="ECO:0000318"/>
    <property type="project" value="GO_Central"/>
</dbReference>
<dbReference type="GO" id="GO:0046983">
    <property type="term" value="F:protein dimerization activity"/>
    <property type="evidence" value="ECO:0007669"/>
    <property type="project" value="InterPro"/>
</dbReference>
<dbReference type="GO" id="GO:0000978">
    <property type="term" value="F:RNA polymerase II cis-regulatory region sequence-specific DNA binding"/>
    <property type="evidence" value="ECO:0000318"/>
    <property type="project" value="GO_Central"/>
</dbReference>
<dbReference type="GO" id="GO:0008340">
    <property type="term" value="P:determination of adult lifespan"/>
    <property type="evidence" value="ECO:0000316"/>
    <property type="project" value="WormBase"/>
</dbReference>
<dbReference type="GO" id="GO:0000122">
    <property type="term" value="P:negative regulation of transcription by RNA polymerase II"/>
    <property type="evidence" value="ECO:0000316"/>
    <property type="project" value="WormBase"/>
</dbReference>
<dbReference type="GO" id="GO:0006357">
    <property type="term" value="P:regulation of transcription by RNA polymerase II"/>
    <property type="evidence" value="ECO:0000318"/>
    <property type="project" value="GO_Central"/>
</dbReference>
<dbReference type="CDD" id="cd11404">
    <property type="entry name" value="bHLHzip_Mlx_like"/>
    <property type="match status" value="1"/>
</dbReference>
<dbReference type="CDD" id="cd21739">
    <property type="entry name" value="NES2-NLS_ChREBP-like"/>
    <property type="match status" value="1"/>
</dbReference>
<dbReference type="FunFam" id="4.10.280.10:FF:000126">
    <property type="entry name" value="Protein WBSCR14 homolog"/>
    <property type="match status" value="1"/>
</dbReference>
<dbReference type="Gene3D" id="4.10.280.10">
    <property type="entry name" value="Helix-loop-helix DNA-binding domain"/>
    <property type="match status" value="1"/>
</dbReference>
<dbReference type="InterPro" id="IPR011598">
    <property type="entry name" value="bHLH_dom"/>
</dbReference>
<dbReference type="InterPro" id="IPR036638">
    <property type="entry name" value="HLH_DNA-bd_sf"/>
</dbReference>
<dbReference type="InterPro" id="IPR052207">
    <property type="entry name" value="Max-like/E-box_TFs"/>
</dbReference>
<dbReference type="PANTHER" id="PTHR15741">
    <property type="entry name" value="BASIC HELIX-LOOP-HELIX ZIP TRANSCRIPTION FACTOR"/>
    <property type="match status" value="1"/>
</dbReference>
<dbReference type="PANTHER" id="PTHR15741:SF37">
    <property type="entry name" value="LD38259P"/>
    <property type="match status" value="1"/>
</dbReference>
<dbReference type="Pfam" id="PF00010">
    <property type="entry name" value="HLH"/>
    <property type="match status" value="1"/>
</dbReference>
<dbReference type="SMART" id="SM00353">
    <property type="entry name" value="HLH"/>
    <property type="match status" value="1"/>
</dbReference>
<dbReference type="SUPFAM" id="SSF47459">
    <property type="entry name" value="HLH, helix-loop-helix DNA-binding domain"/>
    <property type="match status" value="1"/>
</dbReference>
<dbReference type="PROSITE" id="PS50888">
    <property type="entry name" value="BHLH"/>
    <property type="match status" value="1"/>
</dbReference>
<comment type="function">
    <text evidence="3 4 5 6">Transcription factor that binds to the E box motif 5'-CACGTG-3', probably in a heterodimeric complex with mxl-2 (PubMed:17826759). Involved in modulating longevity in response to TOR signaling, dietary restriction, the decline in protein homeostasis associated with normal aging, germline signaling and the insulin-like signaling pathway (PubMed:24699255, PubMed:27001890). Plays a role in autophagy (PubMed:27001890). Involved in regulating migration of the ray 1 precursor cells in the male tail, acting in concert with Wnt and semaphorin signaling pathways (PubMed:17826759). Regulates transcription of genes encoding extracellular matrix (ECM) components which may contribute to the substratum required for migration of the neighboring ray 1 precursor cells (PubMed:17826759). Involved in repressing infection by the microsporidian pathogen N.parisii, probably acting independently of its canonical partner, mxl-2 (PubMed:27402359).</text>
</comment>
<comment type="interaction">
    <interactant intactId="EBI-2408887">
        <id>P41846</id>
    </interactant>
    <interactant intactId="EBI-2408874">
        <id>Q9TZ70</id>
        <label>mxl-2</label>
    </interactant>
    <organismsDiffer>false</organismsDiffer>
    <experiments>3</experiments>
</comment>
<comment type="subcellular location">
    <subcellularLocation>
        <location evidence="1 3 4 6">Nucleus</location>
    </subcellularLocation>
    <subcellularLocation>
        <location evidence="4">Cytoplasm</location>
    </subcellularLocation>
    <subcellularLocation>
        <location evidence="5">Mitochondrion</location>
    </subcellularLocation>
    <text evidence="4">Nuclear localization is promoted by conditions of dietary restriction or reduced insulin-like/IGF-1 signaling in a pha-4-dependent manner.</text>
</comment>
<comment type="tissue specificity">
    <text evidence="5 6">Expressed in intestine, neurons, muscle, hypodermis, excretory cell and other tissues.</text>
</comment>
<comment type="developmental stage">
    <text evidence="3">Expressed in epidermal cells as early as the 50-100 cell stage of embryogenesis and in intestinal cells at the 4E stage (PubMed:17826759). Expressed in non-migratory, syncytial epidermis at larval stage L1 (PubMed:17826759).</text>
</comment>
<comment type="disruption phenotype">
    <text evidence="4 5 6">RNAi-mediated knockdown reduces lifespan, which is further reduced on daf-2 or glp-1 mutant backgrounds (PubMed:24699255, PubMed:27001890). RNAi-mediated knockdown causes premature onset of polyglutamine-mediated paralysis (PubMed:24699255). RNAi-mediated knockdown increases spore levels of the microsporidian pathogen N.parisii during infection, on an mxl-2 or mdl-1 mutant background (PubMed:27402359).</text>
</comment>
<reference key="1">
    <citation type="submission" date="1999-12" db="EMBL/GenBank/DDBJ databases">
        <title>The C. elegans Williams Beuren syndrome WBSCR14 homolog: a potential nematode Myc.</title>
        <authorList>
            <person name="Yuan J."/>
            <person name="Hamelin M."/>
            <person name="Yu L."/>
            <person name="Lubeck O."/>
            <person name="Hull R."/>
            <person name="Savage-Dunn C."/>
            <person name="Blevins R."/>
        </authorList>
    </citation>
    <scope>NUCLEOTIDE SEQUENCE [MRNA]</scope>
    <source>
        <strain>Bristol N2</strain>
    </source>
</reference>
<reference key="2">
    <citation type="journal article" date="2001" name="Hum. Mol. Genet.">
        <title>WBSCR14, a gene mapping to the Williams-Beuren syndrome deleted region, is a new member of the Mlx transcription factor network.</title>
        <authorList>
            <person name="Cairo S."/>
            <person name="Merla G."/>
            <person name="Urbinati F."/>
            <person name="Ballabio A."/>
            <person name="Reymond A."/>
        </authorList>
    </citation>
    <scope>NUCLEOTIDE SEQUENCE [MRNA]</scope>
</reference>
<reference key="3">
    <citation type="journal article" date="1998" name="Science">
        <title>Genome sequence of the nematode C. elegans: a platform for investigating biology.</title>
        <authorList>
            <consortium name="The C. elegans sequencing consortium"/>
        </authorList>
    </citation>
    <scope>NUCLEOTIDE SEQUENCE [LARGE SCALE GENOMIC DNA]</scope>
    <source>
        <strain>Bristol N2</strain>
    </source>
</reference>
<reference key="4">
    <citation type="journal article" date="2007" name="Dev. Biol.">
        <title>A C. elegans Myc-like network cooperates with semaphorin and Wnt signaling pathways to control cell migration.</title>
        <authorList>
            <person name="Pickett C.L."/>
            <person name="Breen K.T."/>
            <person name="Ayer D.E."/>
        </authorList>
    </citation>
    <scope>FUNCTION</scope>
    <scope>SUBCELLULAR LOCATION</scope>
    <scope>DEVELOPMENTAL STAGE</scope>
</reference>
<reference key="5">
    <citation type="journal article" date="2014" name="PLoS Genet.">
        <title>The Caenorhabditis elegans Myc-Mondo/Mad complexes integrate diverse longevity signals.</title>
        <authorList>
            <person name="Johnson D.W."/>
            <person name="Llop J.R."/>
            <person name="Farrell S.F."/>
            <person name="Yuan J."/>
            <person name="Stolzenburg L.R."/>
            <person name="Samuelson A.V."/>
        </authorList>
    </citation>
    <scope>FUNCTION</scope>
    <scope>SUBCELLULAR LOCATION</scope>
    <scope>DISRUPTION PHENOTYPE</scope>
</reference>
<reference key="6">
    <citation type="journal article" date="2016" name="G3 (Bethesda)">
        <title>Microsporidia Intracellular Development Relies on Myc Interaction Network Transcription Factors in the Host.</title>
        <authorList>
            <person name="Botts M.R."/>
            <person name="Cohen L.B."/>
            <person name="Probert C.S."/>
            <person name="Wu F."/>
            <person name="Troemel E.R."/>
        </authorList>
    </citation>
    <scope>FUNCTION</scope>
    <scope>SUBCELLULAR LOCATION</scope>
    <scope>TISSUE SPECIFICITY</scope>
    <scope>DISRUPTION PHENOTYPE</scope>
</reference>
<reference key="7">
    <citation type="journal article" date="2016" name="Nat. Commun.">
        <title>Mondo complexes regulate TFEB via TOR inhibition to promote longevity in response to gonadal signals.</title>
        <authorList>
            <person name="Nakamura S."/>
            <person name="Karalay O."/>
            <person name="Jaeger P.S."/>
            <person name="Horikawa M."/>
            <person name="Klein C."/>
            <person name="Nakamura K."/>
            <person name="Latza C."/>
            <person name="Templer S.E."/>
            <person name="Dieterich C."/>
            <person name="Antebi A."/>
        </authorList>
    </citation>
    <scope>FUNCTION</scope>
    <scope>SUBCELLULAR LOCATION</scope>
    <scope>TISSUE SPECIFICITY</scope>
    <scope>DISRUPTION PHENOTYPE</scope>
</reference>
<evidence type="ECO:0000255" key="1">
    <source>
        <dbReference type="PROSITE-ProRule" id="PRU00981"/>
    </source>
</evidence>
<evidence type="ECO:0000256" key="2">
    <source>
        <dbReference type="SAM" id="MobiDB-lite"/>
    </source>
</evidence>
<evidence type="ECO:0000269" key="3">
    <source>
    </source>
</evidence>
<evidence type="ECO:0000269" key="4">
    <source>
    </source>
</evidence>
<evidence type="ECO:0000269" key="5">
    <source>
    </source>
</evidence>
<evidence type="ECO:0000269" key="6">
    <source>
    </source>
</evidence>
<evidence type="ECO:0000305" key="7"/>
<proteinExistence type="evidence at protein level"/>
<feature type="chain" id="PRO_0000127506" description="Protein WBSCR14 homolog">
    <location>
        <begin position="1"/>
        <end position="1009"/>
    </location>
</feature>
<feature type="domain" description="bHLH" evidence="1">
    <location>
        <begin position="803"/>
        <end position="856"/>
    </location>
</feature>
<feature type="region of interest" description="Disordered" evidence="2">
    <location>
        <begin position="1"/>
        <end position="20"/>
    </location>
</feature>
<feature type="region of interest" description="Disordered" evidence="2">
    <location>
        <begin position="304"/>
        <end position="354"/>
    </location>
</feature>
<feature type="region of interest" description="Disordered" evidence="2">
    <location>
        <begin position="488"/>
        <end position="531"/>
    </location>
</feature>
<feature type="region of interest" description="Disordered" evidence="2">
    <location>
        <begin position="686"/>
        <end position="728"/>
    </location>
</feature>
<feature type="region of interest" description="Leucine-zipper">
    <location>
        <begin position="856"/>
        <end position="877"/>
    </location>
</feature>
<feature type="compositionally biased region" description="Polar residues" evidence="2">
    <location>
        <begin position="324"/>
        <end position="350"/>
    </location>
</feature>
<feature type="compositionally biased region" description="Polar residues" evidence="2">
    <location>
        <begin position="499"/>
        <end position="508"/>
    </location>
</feature>
<feature type="compositionally biased region" description="Low complexity" evidence="2">
    <location>
        <begin position="511"/>
        <end position="526"/>
    </location>
</feature>
<feature type="compositionally biased region" description="Polar residues" evidence="2">
    <location>
        <begin position="686"/>
        <end position="695"/>
    </location>
</feature>
<feature type="sequence conflict" description="In Ref. 1." evidence="7" ref="1">
    <location>
        <begin position="1"/>
        <end position="96"/>
    </location>
</feature>
<feature type="sequence conflict" description="In Ref. 1; AAL50027." evidence="7" ref="1">
    <original>KWKDFKGLRLHWKQRVR</original>
    <variation>MEGFQRITSFIGSRGYD</variation>
    <location>
        <begin position="97"/>
        <end position="113"/>
    </location>
</feature>
<feature type="sequence conflict" description="In Ref. 1; AAL50027." evidence="7" ref="1">
    <original>E</original>
    <variation>G</variation>
    <location>
        <position position="168"/>
    </location>
</feature>
<feature type="sequence conflict" description="In Ref. 1; AAL50027." evidence="7" ref="1">
    <original>QPQ</original>
    <variation>HPN</variation>
    <location>
        <begin position="523"/>
        <end position="525"/>
    </location>
</feature>
<feature type="sequence conflict" description="In Ref. 1; AAL50027." evidence="7" ref="1">
    <original>E</original>
    <variation>G</variation>
    <location>
        <position position="725"/>
    </location>
</feature>
<feature type="sequence conflict" description="In Ref. 1; AAL50027." evidence="7" ref="1">
    <original>A</original>
    <variation>T</variation>
    <location>
        <position position="729"/>
    </location>
</feature>
<feature type="sequence conflict" description="In Ref. 1; AAL50027." evidence="7" ref="1">
    <original>N</original>
    <variation>S</variation>
    <location>
        <position position="921"/>
    </location>
</feature>
<name>WBS14_CAEEL</name>
<protein>
    <recommendedName>
        <fullName>Protein WBSCR14 homolog</fullName>
    </recommendedName>
    <alternativeName>
        <fullName>MLX interactor</fullName>
    </alternativeName>
</protein>
<gene>
    <name type="primary">mml-1</name>
    <name type="synonym">mio</name>
    <name type="ORF">T20B12.6</name>
</gene>
<accession>P41846</accession>
<accession>Q9BKE3</accession>
<organism>
    <name type="scientific">Caenorhabditis elegans</name>
    <dbReference type="NCBI Taxonomy" id="6239"/>
    <lineage>
        <taxon>Eukaryota</taxon>
        <taxon>Metazoa</taxon>
        <taxon>Ecdysozoa</taxon>
        <taxon>Nematoda</taxon>
        <taxon>Chromadorea</taxon>
        <taxon>Rhabditida</taxon>
        <taxon>Rhabditina</taxon>
        <taxon>Rhabditomorpha</taxon>
        <taxon>Rhabditoidea</taxon>
        <taxon>Rhabditidae</taxon>
        <taxon>Peloderinae</taxon>
        <taxon>Caenorhabditis</taxon>
    </lineage>
</organism>
<keyword id="KW-0963">Cytoplasm</keyword>
<keyword id="KW-0238">DNA-binding</keyword>
<keyword id="KW-0496">Mitochondrion</keyword>
<keyword id="KW-0539">Nucleus</keyword>
<keyword id="KW-1185">Reference proteome</keyword>
<keyword id="KW-0678">Repressor</keyword>
<keyword id="KW-0804">Transcription</keyword>
<keyword id="KW-0805">Transcription regulation</keyword>